<sequence>QVHCYNSNFPKGMLLRFFVHFYDMEIIEEEAFLAWKEDITQEFPGKGKALFQVNQWLTWLETAEEEESEEEAD</sequence>
<keyword id="KW-0396">Initiation factor</keyword>
<keyword id="KW-0597">Phosphoprotein</keyword>
<keyword id="KW-0648">Protein biosynthesis</keyword>
<keyword id="KW-1185">Reference proteome</keyword>
<keyword id="KW-0678">Repressor</keyword>
<keyword id="KW-0810">Translation regulation</keyword>
<organism evidence="5">
    <name type="scientific">Gallus gallus</name>
    <name type="common">Chicken</name>
    <dbReference type="NCBI Taxonomy" id="9031"/>
    <lineage>
        <taxon>Eukaryota</taxon>
        <taxon>Metazoa</taxon>
        <taxon>Chordata</taxon>
        <taxon>Craniata</taxon>
        <taxon>Vertebrata</taxon>
        <taxon>Euteleostomi</taxon>
        <taxon>Archelosauria</taxon>
        <taxon>Archosauria</taxon>
        <taxon>Dinosauria</taxon>
        <taxon>Saurischia</taxon>
        <taxon>Theropoda</taxon>
        <taxon>Coelurosauria</taxon>
        <taxon>Aves</taxon>
        <taxon>Neognathae</taxon>
        <taxon>Galloanserae</taxon>
        <taxon>Galliformes</taxon>
        <taxon>Phasianidae</taxon>
        <taxon>Phasianinae</taxon>
        <taxon>Gallus</taxon>
    </lineage>
</organism>
<comment type="function">
    <text evidence="2">Appears to play a role in the switch from cap-dependent to IRES-mediated translation during mitosis, apoptosis and viral infection. Cleaved by some caspases and viral proteases (By similarity).</text>
</comment>
<comment type="subunit">
    <text evidence="1">Interacts with the serine/threonine protein kinases MKNK1 and MKNK2. Binds EIF4A and EIF3 (By similarity).</text>
</comment>
<comment type="PTM">
    <text evidence="2">Phosphorylation; hyperphosphorylated during mitosis.</text>
</comment>
<comment type="similarity">
    <text evidence="4">Belongs to the eukaryotic initiation factor 4G family.</text>
</comment>
<dbReference type="EMBL" id="AF052193">
    <property type="protein sequence ID" value="AAC06019.1"/>
    <property type="molecule type" value="mRNA"/>
</dbReference>
<dbReference type="SMR" id="O73777"/>
<dbReference type="FunCoup" id="O73777">
    <property type="interactions" value="3002"/>
</dbReference>
<dbReference type="STRING" id="9031.ENSGALP00000039068"/>
<dbReference type="PaxDb" id="9031-ENSGALP00000039068"/>
<dbReference type="VEuPathDB" id="HostDB:geneid_395905"/>
<dbReference type="eggNOG" id="KOG0401">
    <property type="taxonomic scope" value="Eukaryota"/>
</dbReference>
<dbReference type="HOGENOM" id="CLU_001519_3_0_1"/>
<dbReference type="InParanoid" id="O73777"/>
<dbReference type="OrthoDB" id="514777at2759"/>
<dbReference type="Proteomes" id="UP000000539">
    <property type="component" value="Unassembled WGS sequence"/>
</dbReference>
<dbReference type="GO" id="GO:0003743">
    <property type="term" value="F:translation initiation factor activity"/>
    <property type="evidence" value="ECO:0007669"/>
    <property type="project" value="UniProtKB-KW"/>
</dbReference>
<dbReference type="GO" id="GO:0006417">
    <property type="term" value="P:regulation of translation"/>
    <property type="evidence" value="ECO:0007669"/>
    <property type="project" value="UniProtKB-KW"/>
</dbReference>
<dbReference type="Gene3D" id="1.25.40.180">
    <property type="match status" value="1"/>
</dbReference>
<dbReference type="InterPro" id="IPR016024">
    <property type="entry name" value="ARM-type_fold"/>
</dbReference>
<dbReference type="InterPro" id="IPR003307">
    <property type="entry name" value="W2_domain"/>
</dbReference>
<dbReference type="Pfam" id="PF02020">
    <property type="entry name" value="W2"/>
    <property type="match status" value="1"/>
</dbReference>
<dbReference type="SMART" id="SM00515">
    <property type="entry name" value="eIF5C"/>
    <property type="match status" value="1"/>
</dbReference>
<dbReference type="SUPFAM" id="SSF48371">
    <property type="entry name" value="ARM repeat"/>
    <property type="match status" value="1"/>
</dbReference>
<dbReference type="PROSITE" id="PS51363">
    <property type="entry name" value="W2"/>
    <property type="match status" value="1"/>
</dbReference>
<accession>O73777</accession>
<feature type="chain" id="PRO_0000213328" description="Eukaryotic translation initiation factor 4 gamma 2">
    <location>
        <begin position="1" status="less than"/>
        <end position="73"/>
    </location>
</feature>
<feature type="domain" description="W2" evidence="3">
    <location>
        <begin position="1"/>
        <end position="70"/>
    </location>
</feature>
<feature type="non-terminal residue" evidence="5">
    <location>
        <position position="1"/>
    </location>
</feature>
<evidence type="ECO:0000250" key="1"/>
<evidence type="ECO:0000250" key="2">
    <source>
        <dbReference type="UniProtKB" id="P78344"/>
    </source>
</evidence>
<evidence type="ECO:0000255" key="3">
    <source>
        <dbReference type="PROSITE-ProRule" id="PRU00695"/>
    </source>
</evidence>
<evidence type="ECO:0000305" key="4"/>
<evidence type="ECO:0000312" key="5">
    <source>
        <dbReference type="EMBL" id="AAC06019.1"/>
    </source>
</evidence>
<gene>
    <name type="primary">EIF4G2</name>
</gene>
<reference evidence="5" key="1">
    <citation type="submission" date="1998-03" db="EMBL/GenBank/DDBJ databases">
        <title>Embryonic chick brain mRNA homologous to human p97 and rabbit NAT1, partial cds.</title>
        <authorList>
            <person name="Sevigny M.B."/>
            <person name="Won M."/>
            <person name="Troy F.A. II"/>
        </authorList>
    </citation>
    <scope>NUCLEOTIDE SEQUENCE [MRNA]</scope>
    <source>
        <tissue>Brain</tissue>
    </source>
</reference>
<proteinExistence type="evidence at transcript level"/>
<protein>
    <recommendedName>
        <fullName>Eukaryotic translation initiation factor 4 gamma 2</fullName>
        <shortName>eIF-4-gamma 2</shortName>
        <shortName>eIF-4G 2</shortName>
        <shortName>eIF4G 2</shortName>
    </recommendedName>
    <alternativeName>
        <fullName>p97</fullName>
    </alternativeName>
</protein>
<name>IF4G2_CHICK</name>